<protein>
    <recommendedName>
        <fullName evidence="1">Ribonuclease BN</fullName>
        <shortName evidence="1">RNase BN</shortName>
        <ecNumber evidence="1">3.1.-.-</ecNumber>
    </recommendedName>
    <alternativeName>
        <fullName evidence="1">Ribonuclease Z homolog</fullName>
        <shortName evidence="1">RNase Z homolog</shortName>
    </alternativeName>
</protein>
<keyword id="KW-0255">Endonuclease</keyword>
<keyword id="KW-0269">Exonuclease</keyword>
<keyword id="KW-0378">Hydrolase</keyword>
<keyword id="KW-0479">Metal-binding</keyword>
<keyword id="KW-0540">Nuclease</keyword>
<keyword id="KW-0819">tRNA processing</keyword>
<keyword id="KW-0862">Zinc</keyword>
<reference key="1">
    <citation type="journal article" date="2009" name="PLoS Genet.">
        <title>Organised genome dynamics in the Escherichia coli species results in highly diverse adaptive paths.</title>
        <authorList>
            <person name="Touchon M."/>
            <person name="Hoede C."/>
            <person name="Tenaillon O."/>
            <person name="Barbe V."/>
            <person name="Baeriswyl S."/>
            <person name="Bidet P."/>
            <person name="Bingen E."/>
            <person name="Bonacorsi S."/>
            <person name="Bouchier C."/>
            <person name="Bouvet O."/>
            <person name="Calteau A."/>
            <person name="Chiapello H."/>
            <person name="Clermont O."/>
            <person name="Cruveiller S."/>
            <person name="Danchin A."/>
            <person name="Diard M."/>
            <person name="Dossat C."/>
            <person name="Karoui M.E."/>
            <person name="Frapy E."/>
            <person name="Garry L."/>
            <person name="Ghigo J.M."/>
            <person name="Gilles A.M."/>
            <person name="Johnson J."/>
            <person name="Le Bouguenec C."/>
            <person name="Lescat M."/>
            <person name="Mangenot S."/>
            <person name="Martinez-Jehanne V."/>
            <person name="Matic I."/>
            <person name="Nassif X."/>
            <person name="Oztas S."/>
            <person name="Petit M.A."/>
            <person name="Pichon C."/>
            <person name="Rouy Z."/>
            <person name="Ruf C.S."/>
            <person name="Schneider D."/>
            <person name="Tourret J."/>
            <person name="Vacherie B."/>
            <person name="Vallenet D."/>
            <person name="Medigue C."/>
            <person name="Rocha E.P.C."/>
            <person name="Denamur E."/>
        </authorList>
    </citation>
    <scope>NUCLEOTIDE SEQUENCE [LARGE SCALE GENOMIC DNA]</scope>
    <source>
        <strain>ED1a</strain>
    </source>
</reference>
<proteinExistence type="inferred from homology"/>
<organism>
    <name type="scientific">Escherichia coli O81 (strain ED1a)</name>
    <dbReference type="NCBI Taxonomy" id="585397"/>
    <lineage>
        <taxon>Bacteria</taxon>
        <taxon>Pseudomonadati</taxon>
        <taxon>Pseudomonadota</taxon>
        <taxon>Gammaproteobacteria</taxon>
        <taxon>Enterobacterales</taxon>
        <taxon>Enterobacteriaceae</taxon>
        <taxon>Escherichia</taxon>
    </lineage>
</organism>
<sequence length="305" mass="32936">MELIFLGTSAGVPTRTRNVTAILLNLQHPTQSGLWLFDCGEGTQHQLLHTAFNPGKLDKIFISHLHGDHLFGLPGLLCSRSMSGIIQPLTIYGPHGIREFVETALRISGSWTDYPLEIVEIGAGEIFDDGLRKVTAYPMEHPLECYGYRIEEHDKPGALNAQALKAAGVPPGPLFQELKAGKTIMLDDGRQINGADYLAAPVPGKALAIFGDTGPCDAALELAKGVDVMVHEATLDMAMEAKANSRGHSSTRQAAALAREAGVGKLIITHVSSRYDDKGCQHLLRECRSIFPATELANDFAVFSI</sequence>
<gene>
    <name evidence="1" type="primary">rbn</name>
    <name type="synonym">rnz</name>
    <name type="ordered locus">ECED1_2736</name>
</gene>
<name>RBN_ECO81</name>
<feature type="chain" id="PRO_1000187956" description="Ribonuclease BN">
    <location>
        <begin position="1"/>
        <end position="305"/>
    </location>
</feature>
<feature type="active site" description="Proton acceptor" evidence="1">
    <location>
        <position position="68"/>
    </location>
</feature>
<feature type="binding site" evidence="1">
    <location>
        <position position="64"/>
    </location>
    <ligand>
        <name>Zn(2+)</name>
        <dbReference type="ChEBI" id="CHEBI:29105"/>
        <label>1</label>
        <note>catalytic</note>
    </ligand>
</feature>
<feature type="binding site" evidence="1">
    <location>
        <position position="66"/>
    </location>
    <ligand>
        <name>Zn(2+)</name>
        <dbReference type="ChEBI" id="CHEBI:29105"/>
        <label>1</label>
        <note>catalytic</note>
    </ligand>
</feature>
<feature type="binding site" evidence="1">
    <location>
        <position position="68"/>
    </location>
    <ligand>
        <name>Zn(2+)</name>
        <dbReference type="ChEBI" id="CHEBI:29105"/>
        <label>2</label>
        <note>catalytic</note>
    </ligand>
</feature>
<feature type="binding site" evidence="1">
    <location>
        <position position="69"/>
    </location>
    <ligand>
        <name>Zn(2+)</name>
        <dbReference type="ChEBI" id="CHEBI:29105"/>
        <label>2</label>
        <note>catalytic</note>
    </ligand>
</feature>
<feature type="binding site" evidence="1">
    <location>
        <position position="141"/>
    </location>
    <ligand>
        <name>Zn(2+)</name>
        <dbReference type="ChEBI" id="CHEBI:29105"/>
        <label>1</label>
        <note>catalytic</note>
    </ligand>
</feature>
<feature type="binding site" evidence="1">
    <location>
        <position position="212"/>
    </location>
    <ligand>
        <name>Zn(2+)</name>
        <dbReference type="ChEBI" id="CHEBI:29105"/>
        <label>1</label>
        <note>catalytic</note>
    </ligand>
</feature>
<feature type="binding site" evidence="1">
    <location>
        <position position="212"/>
    </location>
    <ligand>
        <name>Zn(2+)</name>
        <dbReference type="ChEBI" id="CHEBI:29105"/>
        <label>2</label>
        <note>catalytic</note>
    </ligand>
</feature>
<feature type="binding site" evidence="1">
    <location>
        <position position="270"/>
    </location>
    <ligand>
        <name>Zn(2+)</name>
        <dbReference type="ChEBI" id="CHEBI:29105"/>
        <label>2</label>
        <note>catalytic</note>
    </ligand>
</feature>
<evidence type="ECO:0000255" key="1">
    <source>
        <dbReference type="HAMAP-Rule" id="MF_01818"/>
    </source>
</evidence>
<comment type="function">
    <text evidence="1">Zinc phosphodiesterase, which has both exoribonuclease and endoribonuclease activities.</text>
</comment>
<comment type="cofactor">
    <cofactor evidence="1">
        <name>Zn(2+)</name>
        <dbReference type="ChEBI" id="CHEBI:29105"/>
    </cofactor>
    <text evidence="1">Binds 2 Zn(2+) ions.</text>
</comment>
<comment type="subunit">
    <text evidence="1">Homodimer.</text>
</comment>
<comment type="similarity">
    <text evidence="1">Belongs to the RNase Z family. RNase BN subfamily.</text>
</comment>
<dbReference type="EC" id="3.1.-.-" evidence="1"/>
<dbReference type="EMBL" id="CU928162">
    <property type="protein sequence ID" value="CAR08917.2"/>
    <property type="molecule type" value="Genomic_DNA"/>
</dbReference>
<dbReference type="RefSeq" id="WP_000420114.1">
    <property type="nucleotide sequence ID" value="NC_011745.1"/>
</dbReference>
<dbReference type="SMR" id="B7MXV1"/>
<dbReference type="KEGG" id="ecq:ECED1_2736"/>
<dbReference type="HOGENOM" id="CLU_031317_2_0_6"/>
<dbReference type="Proteomes" id="UP000000748">
    <property type="component" value="Chromosome"/>
</dbReference>
<dbReference type="GO" id="GO:0042781">
    <property type="term" value="F:3'-tRNA processing endoribonuclease activity"/>
    <property type="evidence" value="ECO:0007669"/>
    <property type="project" value="TreeGrafter"/>
</dbReference>
<dbReference type="GO" id="GO:0004527">
    <property type="term" value="F:exonuclease activity"/>
    <property type="evidence" value="ECO:0007669"/>
    <property type="project" value="UniProtKB-UniRule"/>
</dbReference>
<dbReference type="GO" id="GO:0008270">
    <property type="term" value="F:zinc ion binding"/>
    <property type="evidence" value="ECO:0007669"/>
    <property type="project" value="UniProtKB-UniRule"/>
</dbReference>
<dbReference type="CDD" id="cd07717">
    <property type="entry name" value="RNaseZ_ZiPD-like_MBL-fold"/>
    <property type="match status" value="1"/>
</dbReference>
<dbReference type="FunFam" id="3.60.15.10:FF:000002">
    <property type="entry name" value="Ribonuclease Z"/>
    <property type="match status" value="1"/>
</dbReference>
<dbReference type="Gene3D" id="3.60.15.10">
    <property type="entry name" value="Ribonuclease Z/Hydroxyacylglutathione hydrolase-like"/>
    <property type="match status" value="1"/>
</dbReference>
<dbReference type="HAMAP" id="MF_01818">
    <property type="entry name" value="RNase_Z_BN"/>
    <property type="match status" value="1"/>
</dbReference>
<dbReference type="InterPro" id="IPR001279">
    <property type="entry name" value="Metallo-B-lactamas"/>
</dbReference>
<dbReference type="InterPro" id="IPR036866">
    <property type="entry name" value="RibonucZ/Hydroxyglut_hydro"/>
</dbReference>
<dbReference type="InterPro" id="IPR013469">
    <property type="entry name" value="Rnase_BN"/>
</dbReference>
<dbReference type="InterPro" id="IPR013471">
    <property type="entry name" value="RNase_Z/BN"/>
</dbReference>
<dbReference type="NCBIfam" id="NF000800">
    <property type="entry name" value="PRK00055.1-1"/>
    <property type="match status" value="1"/>
</dbReference>
<dbReference type="NCBIfam" id="NF000801">
    <property type="entry name" value="PRK00055.1-3"/>
    <property type="match status" value="1"/>
</dbReference>
<dbReference type="NCBIfam" id="TIGR02651">
    <property type="entry name" value="RNase_Z"/>
    <property type="match status" value="1"/>
</dbReference>
<dbReference type="NCBIfam" id="TIGR02649">
    <property type="entry name" value="true_RNase_BN"/>
    <property type="match status" value="1"/>
</dbReference>
<dbReference type="PANTHER" id="PTHR46018">
    <property type="entry name" value="ZINC PHOSPHODIESTERASE ELAC PROTEIN 1"/>
    <property type="match status" value="1"/>
</dbReference>
<dbReference type="PANTHER" id="PTHR46018:SF2">
    <property type="entry name" value="ZINC PHOSPHODIESTERASE ELAC PROTEIN 1"/>
    <property type="match status" value="1"/>
</dbReference>
<dbReference type="Pfam" id="PF12706">
    <property type="entry name" value="Lactamase_B_2"/>
    <property type="match status" value="2"/>
</dbReference>
<dbReference type="SMART" id="SM00849">
    <property type="entry name" value="Lactamase_B"/>
    <property type="match status" value="1"/>
</dbReference>
<dbReference type="SUPFAM" id="SSF56281">
    <property type="entry name" value="Metallo-hydrolase/oxidoreductase"/>
    <property type="match status" value="1"/>
</dbReference>
<accession>B7MXV1</accession>